<gene>
    <name type="primary">trxA</name>
    <name type="ordered locus">TC_0826</name>
</gene>
<proteinExistence type="inferred from homology"/>
<comment type="function">
    <text>Participates in various redox reactions through the reversible oxidation of its active center dithiol to a disulfide and catalyzes dithiol-disulfide exchange reactions.</text>
</comment>
<comment type="similarity">
    <text evidence="2">Belongs to the thioredoxin family.</text>
</comment>
<name>THIO_CHLMU</name>
<accession>Q9PJK3</accession>
<evidence type="ECO:0000255" key="1">
    <source>
        <dbReference type="PROSITE-ProRule" id="PRU00691"/>
    </source>
</evidence>
<evidence type="ECO:0000305" key="2"/>
<sequence>MVQIVSQDNFADSIASGLVLVDFFAEWCGPCKMLTPVLEALAAELPYVTILKLDIDASPRPAEQFGVSSIPTLILFKDGKEVERSVGLKDKDSLVKLISKHQ</sequence>
<protein>
    <recommendedName>
        <fullName>Thioredoxin</fullName>
        <shortName>Trx</shortName>
    </recommendedName>
</protein>
<dbReference type="EMBL" id="AE002160">
    <property type="protein sequence ID" value="AAF39627.1"/>
    <property type="molecule type" value="Genomic_DNA"/>
</dbReference>
<dbReference type="PIR" id="C81660">
    <property type="entry name" value="C81660"/>
</dbReference>
<dbReference type="RefSeq" id="WP_010231695.1">
    <property type="nucleotide sequence ID" value="NZ_CP063055.1"/>
</dbReference>
<dbReference type="SMR" id="Q9PJK3"/>
<dbReference type="GeneID" id="1246194"/>
<dbReference type="KEGG" id="cmu:TC_0826"/>
<dbReference type="eggNOG" id="COG3118">
    <property type="taxonomic scope" value="Bacteria"/>
</dbReference>
<dbReference type="HOGENOM" id="CLU_090389_10_4_0"/>
<dbReference type="OrthoDB" id="9790390at2"/>
<dbReference type="Proteomes" id="UP000000800">
    <property type="component" value="Chromosome"/>
</dbReference>
<dbReference type="GO" id="GO:0005829">
    <property type="term" value="C:cytosol"/>
    <property type="evidence" value="ECO:0007669"/>
    <property type="project" value="TreeGrafter"/>
</dbReference>
<dbReference type="GO" id="GO:0015035">
    <property type="term" value="F:protein-disulfide reductase activity"/>
    <property type="evidence" value="ECO:0007669"/>
    <property type="project" value="InterPro"/>
</dbReference>
<dbReference type="GO" id="GO:0045454">
    <property type="term" value="P:cell redox homeostasis"/>
    <property type="evidence" value="ECO:0007669"/>
    <property type="project" value="TreeGrafter"/>
</dbReference>
<dbReference type="CDD" id="cd02947">
    <property type="entry name" value="TRX_family"/>
    <property type="match status" value="1"/>
</dbReference>
<dbReference type="FunFam" id="3.40.30.10:FF:000001">
    <property type="entry name" value="Thioredoxin"/>
    <property type="match status" value="1"/>
</dbReference>
<dbReference type="Gene3D" id="3.40.30.10">
    <property type="entry name" value="Glutaredoxin"/>
    <property type="match status" value="1"/>
</dbReference>
<dbReference type="InterPro" id="IPR005746">
    <property type="entry name" value="Thioredoxin"/>
</dbReference>
<dbReference type="InterPro" id="IPR036249">
    <property type="entry name" value="Thioredoxin-like_sf"/>
</dbReference>
<dbReference type="InterPro" id="IPR017937">
    <property type="entry name" value="Thioredoxin_CS"/>
</dbReference>
<dbReference type="InterPro" id="IPR013766">
    <property type="entry name" value="Thioredoxin_domain"/>
</dbReference>
<dbReference type="NCBIfam" id="TIGR01068">
    <property type="entry name" value="thioredoxin"/>
    <property type="match status" value="1"/>
</dbReference>
<dbReference type="PANTHER" id="PTHR45663">
    <property type="entry name" value="GEO12009P1"/>
    <property type="match status" value="1"/>
</dbReference>
<dbReference type="PANTHER" id="PTHR45663:SF11">
    <property type="entry name" value="GEO12009P1"/>
    <property type="match status" value="1"/>
</dbReference>
<dbReference type="Pfam" id="PF00085">
    <property type="entry name" value="Thioredoxin"/>
    <property type="match status" value="1"/>
</dbReference>
<dbReference type="PIRSF" id="PIRSF000077">
    <property type="entry name" value="Thioredoxin"/>
    <property type="match status" value="1"/>
</dbReference>
<dbReference type="PRINTS" id="PR00421">
    <property type="entry name" value="THIOREDOXIN"/>
</dbReference>
<dbReference type="SUPFAM" id="SSF52833">
    <property type="entry name" value="Thioredoxin-like"/>
    <property type="match status" value="1"/>
</dbReference>
<dbReference type="PROSITE" id="PS00194">
    <property type="entry name" value="THIOREDOXIN_1"/>
    <property type="match status" value="1"/>
</dbReference>
<dbReference type="PROSITE" id="PS51352">
    <property type="entry name" value="THIOREDOXIN_2"/>
    <property type="match status" value="1"/>
</dbReference>
<keyword id="KW-1015">Disulfide bond</keyword>
<keyword id="KW-0249">Electron transport</keyword>
<keyword id="KW-0676">Redox-active center</keyword>
<keyword id="KW-0813">Transport</keyword>
<reference key="1">
    <citation type="journal article" date="2000" name="Nucleic Acids Res.">
        <title>Genome sequences of Chlamydia trachomatis MoPn and Chlamydia pneumoniae AR39.</title>
        <authorList>
            <person name="Read T.D."/>
            <person name="Brunham R.C."/>
            <person name="Shen C."/>
            <person name="Gill S.R."/>
            <person name="Heidelberg J.F."/>
            <person name="White O."/>
            <person name="Hickey E.K."/>
            <person name="Peterson J.D."/>
            <person name="Utterback T.R."/>
            <person name="Berry K.J."/>
            <person name="Bass S."/>
            <person name="Linher K.D."/>
            <person name="Weidman J.F."/>
            <person name="Khouri H.M."/>
            <person name="Craven B."/>
            <person name="Bowman C."/>
            <person name="Dodson R.J."/>
            <person name="Gwinn M.L."/>
            <person name="Nelson W.C."/>
            <person name="DeBoy R.T."/>
            <person name="Kolonay J.F."/>
            <person name="McClarty G."/>
            <person name="Salzberg S.L."/>
            <person name="Eisen J.A."/>
            <person name="Fraser C.M."/>
        </authorList>
    </citation>
    <scope>NUCLEOTIDE SEQUENCE [LARGE SCALE GENOMIC DNA]</scope>
    <source>
        <strain>MoPn / Nigg</strain>
    </source>
</reference>
<feature type="chain" id="PRO_0000120083" description="Thioredoxin">
    <location>
        <begin position="1"/>
        <end position="102"/>
    </location>
</feature>
<feature type="domain" description="Thioredoxin" evidence="1">
    <location>
        <begin position="1"/>
        <end position="102"/>
    </location>
</feature>
<feature type="disulfide bond" description="Redox-active" evidence="1">
    <location>
        <begin position="28"/>
        <end position="31"/>
    </location>
</feature>
<organism>
    <name type="scientific">Chlamydia muridarum (strain MoPn / Nigg)</name>
    <dbReference type="NCBI Taxonomy" id="243161"/>
    <lineage>
        <taxon>Bacteria</taxon>
        <taxon>Pseudomonadati</taxon>
        <taxon>Chlamydiota</taxon>
        <taxon>Chlamydiia</taxon>
        <taxon>Chlamydiales</taxon>
        <taxon>Chlamydiaceae</taxon>
        <taxon>Chlamydia/Chlamydophila group</taxon>
        <taxon>Chlamydia</taxon>
    </lineage>
</organism>